<name>KAD_MANSM</name>
<organism>
    <name type="scientific">Mannheimia succiniciproducens (strain KCTC 0769BP / MBEL55E)</name>
    <dbReference type="NCBI Taxonomy" id="221988"/>
    <lineage>
        <taxon>Bacteria</taxon>
        <taxon>Pseudomonadati</taxon>
        <taxon>Pseudomonadota</taxon>
        <taxon>Gammaproteobacteria</taxon>
        <taxon>Pasteurellales</taxon>
        <taxon>Pasteurellaceae</taxon>
        <taxon>Basfia</taxon>
    </lineage>
</organism>
<accession>Q65UF7</accession>
<keyword id="KW-0067">ATP-binding</keyword>
<keyword id="KW-0963">Cytoplasm</keyword>
<keyword id="KW-0418">Kinase</keyword>
<keyword id="KW-0545">Nucleotide biosynthesis</keyword>
<keyword id="KW-0547">Nucleotide-binding</keyword>
<keyword id="KW-0808">Transferase</keyword>
<protein>
    <recommendedName>
        <fullName evidence="1">Adenylate kinase</fullName>
        <shortName evidence="1">AK</shortName>
        <ecNumber evidence="1">2.7.4.3</ecNumber>
    </recommendedName>
    <alternativeName>
        <fullName evidence="1">ATP-AMP transphosphorylase</fullName>
    </alternativeName>
    <alternativeName>
        <fullName evidence="1">ATP:AMP phosphotransferase</fullName>
    </alternativeName>
    <alternativeName>
        <fullName evidence="1">Adenylate monophosphate kinase</fullName>
    </alternativeName>
</protein>
<comment type="function">
    <text evidence="1">Catalyzes the reversible transfer of the terminal phosphate group between ATP and AMP. Plays an important role in cellular energy homeostasis and in adenine nucleotide metabolism.</text>
</comment>
<comment type="catalytic activity">
    <reaction evidence="1">
        <text>AMP + ATP = 2 ADP</text>
        <dbReference type="Rhea" id="RHEA:12973"/>
        <dbReference type="ChEBI" id="CHEBI:30616"/>
        <dbReference type="ChEBI" id="CHEBI:456215"/>
        <dbReference type="ChEBI" id="CHEBI:456216"/>
        <dbReference type="EC" id="2.7.4.3"/>
    </reaction>
</comment>
<comment type="pathway">
    <text evidence="1">Purine metabolism; AMP biosynthesis via salvage pathway; AMP from ADP: step 1/1.</text>
</comment>
<comment type="subunit">
    <text evidence="1">Monomer.</text>
</comment>
<comment type="subcellular location">
    <subcellularLocation>
        <location evidence="1">Cytoplasm</location>
    </subcellularLocation>
</comment>
<comment type="domain">
    <text evidence="1">Consists of three domains, a large central CORE domain and two small peripheral domains, NMPbind and LID, which undergo movements during catalysis. The LID domain closes over the site of phosphoryl transfer upon ATP binding. Assembling and dissambling the active center during each catalytic cycle provides an effective means to prevent ATP hydrolysis.</text>
</comment>
<comment type="similarity">
    <text evidence="1">Belongs to the adenylate kinase family.</text>
</comment>
<gene>
    <name evidence="1" type="primary">adk</name>
    <name type="ordered locus">MS0796</name>
</gene>
<feature type="chain" id="PRO_0000158790" description="Adenylate kinase">
    <location>
        <begin position="1"/>
        <end position="218"/>
    </location>
</feature>
<feature type="region of interest" description="NMP" evidence="1">
    <location>
        <begin position="34"/>
        <end position="63"/>
    </location>
</feature>
<feature type="region of interest" description="LID" evidence="1">
    <location>
        <begin position="126"/>
        <end position="163"/>
    </location>
</feature>
<feature type="binding site" evidence="1">
    <location>
        <begin position="14"/>
        <end position="19"/>
    </location>
    <ligand>
        <name>ATP</name>
        <dbReference type="ChEBI" id="CHEBI:30616"/>
    </ligand>
</feature>
<feature type="binding site" evidence="1">
    <location>
        <position position="35"/>
    </location>
    <ligand>
        <name>AMP</name>
        <dbReference type="ChEBI" id="CHEBI:456215"/>
    </ligand>
</feature>
<feature type="binding site" evidence="1">
    <location>
        <position position="40"/>
    </location>
    <ligand>
        <name>AMP</name>
        <dbReference type="ChEBI" id="CHEBI:456215"/>
    </ligand>
</feature>
<feature type="binding site" evidence="1">
    <location>
        <begin position="61"/>
        <end position="63"/>
    </location>
    <ligand>
        <name>AMP</name>
        <dbReference type="ChEBI" id="CHEBI:456215"/>
    </ligand>
</feature>
<feature type="binding site" evidence="1">
    <location>
        <begin position="89"/>
        <end position="92"/>
    </location>
    <ligand>
        <name>AMP</name>
        <dbReference type="ChEBI" id="CHEBI:456215"/>
    </ligand>
</feature>
<feature type="binding site" evidence="1">
    <location>
        <position position="96"/>
    </location>
    <ligand>
        <name>AMP</name>
        <dbReference type="ChEBI" id="CHEBI:456215"/>
    </ligand>
</feature>
<feature type="binding site" evidence="1">
    <location>
        <position position="127"/>
    </location>
    <ligand>
        <name>ATP</name>
        <dbReference type="ChEBI" id="CHEBI:30616"/>
    </ligand>
</feature>
<feature type="binding site" evidence="1">
    <location>
        <begin position="136"/>
        <end position="137"/>
    </location>
    <ligand>
        <name>ATP</name>
        <dbReference type="ChEBI" id="CHEBI:30616"/>
    </ligand>
</feature>
<feature type="binding site" evidence="1">
    <location>
        <position position="160"/>
    </location>
    <ligand>
        <name>AMP</name>
        <dbReference type="ChEBI" id="CHEBI:456215"/>
    </ligand>
</feature>
<feature type="binding site" evidence="1">
    <location>
        <position position="171"/>
    </location>
    <ligand>
        <name>AMP</name>
        <dbReference type="ChEBI" id="CHEBI:456215"/>
    </ligand>
</feature>
<feature type="binding site" evidence="1">
    <location>
        <position position="204"/>
    </location>
    <ligand>
        <name>ATP</name>
        <dbReference type="ChEBI" id="CHEBI:30616"/>
    </ligand>
</feature>
<proteinExistence type="inferred from homology"/>
<reference key="1">
    <citation type="journal article" date="2004" name="Nat. Biotechnol.">
        <title>The genome sequence of the capnophilic rumen bacterium Mannheimia succiniciproducens.</title>
        <authorList>
            <person name="Hong S.H."/>
            <person name="Kim J.S."/>
            <person name="Lee S.Y."/>
            <person name="In Y.H."/>
            <person name="Choi S.S."/>
            <person name="Rih J.-K."/>
            <person name="Kim C.H."/>
            <person name="Jeong H."/>
            <person name="Hur C.G."/>
            <person name="Kim J.J."/>
        </authorList>
    </citation>
    <scope>NUCLEOTIDE SEQUENCE [LARGE SCALE GENOMIC DNA]</scope>
    <source>
        <strain>KCTC 0769BP / MBEL55E</strain>
    </source>
</reference>
<evidence type="ECO:0000255" key="1">
    <source>
        <dbReference type="HAMAP-Rule" id="MF_00235"/>
    </source>
</evidence>
<sequence>MEISMKIILLGAPGAGKGTQAQFIMNKFGIPQISTGDMFRAAIKAGTELGKQAKALMDEGKLVPDELTVALVKDRIAQPDCANGFLLDGFPRTIPQADALKDSGVNIDYVLEFDVPDEVIVERMSGRRVHQASGRSYHIVYNPPKVEGKDDVTGEDLIIRADDKPETVLDRLAVYHKQTQPLVDYYQAEANAGNTKYFRLDGTKKVEEVSAELNSILG</sequence>
<dbReference type="EC" id="2.7.4.3" evidence="1"/>
<dbReference type="EMBL" id="AE016827">
    <property type="protein sequence ID" value="AAU37403.1"/>
    <property type="molecule type" value="Genomic_DNA"/>
</dbReference>
<dbReference type="SMR" id="Q65UF7"/>
<dbReference type="STRING" id="221988.MS0796"/>
<dbReference type="KEGG" id="msu:MS0796"/>
<dbReference type="eggNOG" id="COG0563">
    <property type="taxonomic scope" value="Bacteria"/>
</dbReference>
<dbReference type="HOGENOM" id="CLU_032354_1_2_6"/>
<dbReference type="UniPathway" id="UPA00588">
    <property type="reaction ID" value="UER00649"/>
</dbReference>
<dbReference type="Proteomes" id="UP000000607">
    <property type="component" value="Chromosome"/>
</dbReference>
<dbReference type="GO" id="GO:0005737">
    <property type="term" value="C:cytoplasm"/>
    <property type="evidence" value="ECO:0007669"/>
    <property type="project" value="UniProtKB-SubCell"/>
</dbReference>
<dbReference type="GO" id="GO:0004017">
    <property type="term" value="F:adenylate kinase activity"/>
    <property type="evidence" value="ECO:0007669"/>
    <property type="project" value="UniProtKB-UniRule"/>
</dbReference>
<dbReference type="GO" id="GO:0005524">
    <property type="term" value="F:ATP binding"/>
    <property type="evidence" value="ECO:0007669"/>
    <property type="project" value="UniProtKB-UniRule"/>
</dbReference>
<dbReference type="GO" id="GO:0044209">
    <property type="term" value="P:AMP salvage"/>
    <property type="evidence" value="ECO:0007669"/>
    <property type="project" value="UniProtKB-UniRule"/>
</dbReference>
<dbReference type="CDD" id="cd01428">
    <property type="entry name" value="ADK"/>
    <property type="match status" value="1"/>
</dbReference>
<dbReference type="FunFam" id="3.40.50.300:FF:000106">
    <property type="entry name" value="Adenylate kinase mitochondrial"/>
    <property type="match status" value="1"/>
</dbReference>
<dbReference type="Gene3D" id="3.40.50.300">
    <property type="entry name" value="P-loop containing nucleotide triphosphate hydrolases"/>
    <property type="match status" value="1"/>
</dbReference>
<dbReference type="HAMAP" id="MF_00235">
    <property type="entry name" value="Adenylate_kinase_Adk"/>
    <property type="match status" value="1"/>
</dbReference>
<dbReference type="InterPro" id="IPR006259">
    <property type="entry name" value="Adenyl_kin_sub"/>
</dbReference>
<dbReference type="InterPro" id="IPR000850">
    <property type="entry name" value="Adenylat/UMP-CMP_kin"/>
</dbReference>
<dbReference type="InterPro" id="IPR033690">
    <property type="entry name" value="Adenylat_kinase_CS"/>
</dbReference>
<dbReference type="InterPro" id="IPR007862">
    <property type="entry name" value="Adenylate_kinase_lid-dom"/>
</dbReference>
<dbReference type="InterPro" id="IPR027417">
    <property type="entry name" value="P-loop_NTPase"/>
</dbReference>
<dbReference type="NCBIfam" id="TIGR01351">
    <property type="entry name" value="adk"/>
    <property type="match status" value="1"/>
</dbReference>
<dbReference type="NCBIfam" id="NF001379">
    <property type="entry name" value="PRK00279.1-1"/>
    <property type="match status" value="1"/>
</dbReference>
<dbReference type="NCBIfam" id="NF001380">
    <property type="entry name" value="PRK00279.1-2"/>
    <property type="match status" value="1"/>
</dbReference>
<dbReference type="NCBIfam" id="NF001381">
    <property type="entry name" value="PRK00279.1-3"/>
    <property type="match status" value="1"/>
</dbReference>
<dbReference type="NCBIfam" id="NF011100">
    <property type="entry name" value="PRK14527.1"/>
    <property type="match status" value="1"/>
</dbReference>
<dbReference type="PANTHER" id="PTHR23359">
    <property type="entry name" value="NUCLEOTIDE KINASE"/>
    <property type="match status" value="1"/>
</dbReference>
<dbReference type="Pfam" id="PF00406">
    <property type="entry name" value="ADK"/>
    <property type="match status" value="1"/>
</dbReference>
<dbReference type="Pfam" id="PF05191">
    <property type="entry name" value="ADK_lid"/>
    <property type="match status" value="1"/>
</dbReference>
<dbReference type="PRINTS" id="PR00094">
    <property type="entry name" value="ADENYLTKNASE"/>
</dbReference>
<dbReference type="SUPFAM" id="SSF52540">
    <property type="entry name" value="P-loop containing nucleoside triphosphate hydrolases"/>
    <property type="match status" value="1"/>
</dbReference>
<dbReference type="PROSITE" id="PS00113">
    <property type="entry name" value="ADENYLATE_KINASE"/>
    <property type="match status" value="1"/>
</dbReference>